<comment type="function">
    <text evidence="1">NDH-1 shuttles electrons from NADH, via FMN and iron-sulfur (Fe-S) centers, to quinones in the respiratory chain. The immediate electron acceptor for the enzyme in this species is believed to be a menaquinone. Couples the redox reaction to proton translocation (for every two electrons transferred, four hydrogen ions are translocated across the cytoplasmic membrane), and thus conserves the redox energy in a proton gradient.</text>
</comment>
<comment type="catalytic activity">
    <reaction evidence="1">
        <text>a quinone + NADH + 5 H(+)(in) = a quinol + NAD(+) + 4 H(+)(out)</text>
        <dbReference type="Rhea" id="RHEA:57888"/>
        <dbReference type="ChEBI" id="CHEBI:15378"/>
        <dbReference type="ChEBI" id="CHEBI:24646"/>
        <dbReference type="ChEBI" id="CHEBI:57540"/>
        <dbReference type="ChEBI" id="CHEBI:57945"/>
        <dbReference type="ChEBI" id="CHEBI:132124"/>
    </reaction>
</comment>
<comment type="subunit">
    <text evidence="1">NDH-1 is composed of 14 different subunits. Subunits NuoA, H, J, K, L, M, N constitute the membrane sector of the complex.</text>
</comment>
<comment type="subcellular location">
    <subcellularLocation>
        <location evidence="1">Cell membrane</location>
        <topology evidence="1">Multi-pass membrane protein</topology>
    </subcellularLocation>
</comment>
<comment type="similarity">
    <text evidence="1">Belongs to the complex I subunit 4L family.</text>
</comment>
<sequence>MSSVPASAYLTLAIILFCIGLFGALTKRNTVIVLVCIELMLNAANLNFVAFSKLGLFPNLTGQIFSLFTMAVAAAEAAVGLAILIALYRNRTTVHVDEMDTLKG</sequence>
<organism>
    <name type="scientific">Bacillus anthracis (strain CDC 684 / NRRL 3495)</name>
    <dbReference type="NCBI Taxonomy" id="568206"/>
    <lineage>
        <taxon>Bacteria</taxon>
        <taxon>Bacillati</taxon>
        <taxon>Bacillota</taxon>
        <taxon>Bacilli</taxon>
        <taxon>Bacillales</taxon>
        <taxon>Bacillaceae</taxon>
        <taxon>Bacillus</taxon>
        <taxon>Bacillus cereus group</taxon>
    </lineage>
</organism>
<feature type="chain" id="PRO_0000389939" description="NADH-quinone oxidoreductase subunit K">
    <location>
        <begin position="1"/>
        <end position="104"/>
    </location>
</feature>
<feature type="transmembrane region" description="Helical" evidence="1">
    <location>
        <begin position="4"/>
        <end position="24"/>
    </location>
</feature>
<feature type="transmembrane region" description="Helical" evidence="1">
    <location>
        <begin position="31"/>
        <end position="51"/>
    </location>
</feature>
<feature type="transmembrane region" description="Helical" evidence="1">
    <location>
        <begin position="67"/>
        <end position="87"/>
    </location>
</feature>
<protein>
    <recommendedName>
        <fullName evidence="1">NADH-quinone oxidoreductase subunit K</fullName>
        <ecNumber evidence="1">7.1.1.-</ecNumber>
    </recommendedName>
    <alternativeName>
        <fullName evidence="1">NADH dehydrogenase I subunit K</fullName>
    </alternativeName>
    <alternativeName>
        <fullName evidence="1">NDH-1 subunit K</fullName>
    </alternativeName>
</protein>
<accession>C3LFG7</accession>
<gene>
    <name evidence="1" type="primary">nuoK</name>
    <name type="ordered locus">BAMEG_5582</name>
</gene>
<keyword id="KW-1003">Cell membrane</keyword>
<keyword id="KW-0472">Membrane</keyword>
<keyword id="KW-0520">NAD</keyword>
<keyword id="KW-0874">Quinone</keyword>
<keyword id="KW-1278">Translocase</keyword>
<keyword id="KW-0812">Transmembrane</keyword>
<keyword id="KW-1133">Transmembrane helix</keyword>
<keyword id="KW-0813">Transport</keyword>
<reference key="1">
    <citation type="submission" date="2008-10" db="EMBL/GenBank/DDBJ databases">
        <title>Genome sequence of Bacillus anthracis str. CDC 684.</title>
        <authorList>
            <person name="Dodson R.J."/>
            <person name="Munk A.C."/>
            <person name="Brettin T."/>
            <person name="Bruce D."/>
            <person name="Detter C."/>
            <person name="Tapia R."/>
            <person name="Han C."/>
            <person name="Sutton G."/>
            <person name="Sims D."/>
        </authorList>
    </citation>
    <scope>NUCLEOTIDE SEQUENCE [LARGE SCALE GENOMIC DNA]</scope>
    <source>
        <strain>CDC 684 / NRRL 3495</strain>
    </source>
</reference>
<evidence type="ECO:0000255" key="1">
    <source>
        <dbReference type="HAMAP-Rule" id="MF_01456"/>
    </source>
</evidence>
<proteinExistence type="inferred from homology"/>
<dbReference type="EC" id="7.1.1.-" evidence="1"/>
<dbReference type="EMBL" id="CP001215">
    <property type="protein sequence ID" value="ACP15052.1"/>
    <property type="molecule type" value="Genomic_DNA"/>
</dbReference>
<dbReference type="RefSeq" id="WP_000100076.1">
    <property type="nucleotide sequence ID" value="NC_012581.1"/>
</dbReference>
<dbReference type="SMR" id="C3LFG7"/>
<dbReference type="GeneID" id="45025123"/>
<dbReference type="KEGG" id="bah:BAMEG_5582"/>
<dbReference type="HOGENOM" id="CLU_144724_0_0_9"/>
<dbReference type="GO" id="GO:0030964">
    <property type="term" value="C:NADH dehydrogenase complex"/>
    <property type="evidence" value="ECO:0007669"/>
    <property type="project" value="TreeGrafter"/>
</dbReference>
<dbReference type="GO" id="GO:0005886">
    <property type="term" value="C:plasma membrane"/>
    <property type="evidence" value="ECO:0007669"/>
    <property type="project" value="UniProtKB-SubCell"/>
</dbReference>
<dbReference type="GO" id="GO:0050136">
    <property type="term" value="F:NADH:ubiquinone reductase (non-electrogenic) activity"/>
    <property type="evidence" value="ECO:0007669"/>
    <property type="project" value="UniProtKB-UniRule"/>
</dbReference>
<dbReference type="GO" id="GO:0048038">
    <property type="term" value="F:quinone binding"/>
    <property type="evidence" value="ECO:0007669"/>
    <property type="project" value="UniProtKB-KW"/>
</dbReference>
<dbReference type="GO" id="GO:0042773">
    <property type="term" value="P:ATP synthesis coupled electron transport"/>
    <property type="evidence" value="ECO:0007669"/>
    <property type="project" value="InterPro"/>
</dbReference>
<dbReference type="FunFam" id="1.10.287.3510:FF:000001">
    <property type="entry name" value="NADH-quinone oxidoreductase subunit K"/>
    <property type="match status" value="1"/>
</dbReference>
<dbReference type="Gene3D" id="1.10.287.3510">
    <property type="match status" value="1"/>
</dbReference>
<dbReference type="HAMAP" id="MF_01456">
    <property type="entry name" value="NDH1_NuoK"/>
    <property type="match status" value="1"/>
</dbReference>
<dbReference type="InterPro" id="IPR001133">
    <property type="entry name" value="NADH_UbQ_OxRdtase_chain4L/K"/>
</dbReference>
<dbReference type="InterPro" id="IPR039428">
    <property type="entry name" value="NUOK/Mnh_C1-like"/>
</dbReference>
<dbReference type="NCBIfam" id="NF004320">
    <property type="entry name" value="PRK05715.1-2"/>
    <property type="match status" value="1"/>
</dbReference>
<dbReference type="NCBIfam" id="NF004321">
    <property type="entry name" value="PRK05715.1-3"/>
    <property type="match status" value="1"/>
</dbReference>
<dbReference type="NCBIfam" id="NF004322">
    <property type="entry name" value="PRK05715.1-4"/>
    <property type="match status" value="1"/>
</dbReference>
<dbReference type="NCBIfam" id="NF004323">
    <property type="entry name" value="PRK05715.1-5"/>
    <property type="match status" value="1"/>
</dbReference>
<dbReference type="PANTHER" id="PTHR11434:SF16">
    <property type="entry name" value="NADH-UBIQUINONE OXIDOREDUCTASE CHAIN 4L"/>
    <property type="match status" value="1"/>
</dbReference>
<dbReference type="PANTHER" id="PTHR11434">
    <property type="entry name" value="NADH-UBIQUINONE OXIDOREDUCTASE SUBUNIT ND4L"/>
    <property type="match status" value="1"/>
</dbReference>
<dbReference type="Pfam" id="PF00420">
    <property type="entry name" value="Oxidored_q2"/>
    <property type="match status" value="1"/>
</dbReference>
<name>NUOK_BACAC</name>